<gene>
    <name type="primary">cyyr1</name>
    <name type="ORF">zgc:77252</name>
</gene>
<proteinExistence type="evidence at transcript level"/>
<keyword id="KW-0472">Membrane</keyword>
<keyword id="KW-1185">Reference proteome</keyword>
<keyword id="KW-0732">Signal</keyword>
<keyword id="KW-0812">Transmembrane</keyword>
<keyword id="KW-1133">Transmembrane helix</keyword>
<name>CYYR1_DANRE</name>
<feature type="signal peptide" evidence="1">
    <location>
        <begin position="1"/>
        <end position="31"/>
    </location>
</feature>
<feature type="chain" id="PRO_0000341301" description="Cysteine and tyrosine-rich protein 1">
    <location>
        <begin position="32"/>
        <end position="158"/>
    </location>
</feature>
<feature type="topological domain" description="Extracellular" evidence="1">
    <location>
        <begin position="32"/>
        <end position="62"/>
    </location>
</feature>
<feature type="transmembrane region" description="Helical" evidence="1">
    <location>
        <begin position="63"/>
        <end position="83"/>
    </location>
</feature>
<feature type="topological domain" description="Cytoplasmic" evidence="1">
    <location>
        <begin position="84"/>
        <end position="158"/>
    </location>
</feature>
<feature type="region of interest" description="Disordered" evidence="2">
    <location>
        <begin position="119"/>
        <end position="158"/>
    </location>
</feature>
<feature type="compositionally biased region" description="Pro residues" evidence="2">
    <location>
        <begin position="147"/>
        <end position="158"/>
    </location>
</feature>
<sequence length="158" mass="17156">MENPRSASLQKSWKFVRESLLLCLIAGRGEAQCDGCIEYCCDGVPPFCCSYYAYVGDVLSGTAISGIVFGVVFLMGAVAAVFLCVCMCVKNSRGSRVGVFSSTYINTVTQGYPGPPPPPYSYDHEMFPPDLRPPPYTPTVPRSANYSPPPPYPGFSRK</sequence>
<accession>Q6NYG4</accession>
<reference key="1">
    <citation type="submission" date="2004-07" db="EMBL/GenBank/DDBJ databases">
        <authorList>
            <person name="Frabetti F."/>
            <person name="Casadei R."/>
            <person name="Deflorian G."/>
            <person name="D'Addabbo P."/>
            <person name="Vitale L."/>
            <person name="Lenzi L."/>
            <person name="Ortolani M."/>
            <person name="Canaider S."/>
            <person name="Facchin F."/>
            <person name="Strippoli P."/>
            <person name="Carinci P."/>
            <person name="Zannotti M."/>
            <person name="Argenton F."/>
        </authorList>
    </citation>
    <scope>NUCLEOTIDE SEQUENCE [MRNA]</scope>
    <source>
        <tissue>Embryo</tissue>
    </source>
</reference>
<reference key="2">
    <citation type="submission" date="2004-02" db="EMBL/GenBank/DDBJ databases">
        <authorList>
            <consortium name="NIH - Zebrafish Gene Collection (ZGC) project"/>
        </authorList>
    </citation>
    <scope>NUCLEOTIDE SEQUENCE [LARGE SCALE MRNA]</scope>
    <source>
        <tissue>Embryo</tissue>
    </source>
</reference>
<evidence type="ECO:0000255" key="1"/>
<evidence type="ECO:0000256" key="2">
    <source>
        <dbReference type="SAM" id="MobiDB-lite"/>
    </source>
</evidence>
<evidence type="ECO:0000305" key="3"/>
<dbReference type="EMBL" id="AY690837">
    <property type="protein sequence ID" value="AAT99905.1"/>
    <property type="molecule type" value="mRNA"/>
</dbReference>
<dbReference type="EMBL" id="BC066606">
    <property type="protein sequence ID" value="AAH66606.1"/>
    <property type="molecule type" value="mRNA"/>
</dbReference>
<dbReference type="RefSeq" id="NP_998047.1">
    <property type="nucleotide sequence ID" value="NM_212882.2"/>
</dbReference>
<dbReference type="FunCoup" id="Q6NYG4">
    <property type="interactions" value="101"/>
</dbReference>
<dbReference type="STRING" id="7955.ENSDARP00000134426"/>
<dbReference type="Ensembl" id="ENSDART00000160564">
    <property type="protein sequence ID" value="ENSDARP00000134426"/>
    <property type="gene ID" value="ENSDARG00000103783"/>
</dbReference>
<dbReference type="GeneID" id="405818"/>
<dbReference type="KEGG" id="dre:405818"/>
<dbReference type="AGR" id="ZFIN:ZDB-GENE-040426-2356"/>
<dbReference type="CTD" id="116159"/>
<dbReference type="ZFIN" id="ZDB-GENE-040426-2356">
    <property type="gene designation" value="cyyr1"/>
</dbReference>
<dbReference type="HOGENOM" id="CLU_143594_0_0_1"/>
<dbReference type="InParanoid" id="Q6NYG4"/>
<dbReference type="OMA" id="YSYDYEM"/>
<dbReference type="OrthoDB" id="8920103at2759"/>
<dbReference type="PhylomeDB" id="Q6NYG4"/>
<dbReference type="PRO" id="PR:Q6NYG4"/>
<dbReference type="Proteomes" id="UP000000437">
    <property type="component" value="Chromosome 1"/>
</dbReference>
<dbReference type="Bgee" id="ENSDARG00000103783">
    <property type="expression patterns" value="Expressed in somite and 30 other cell types or tissues"/>
</dbReference>
<dbReference type="GO" id="GO:0016020">
    <property type="term" value="C:membrane"/>
    <property type="evidence" value="ECO:0007669"/>
    <property type="project" value="UniProtKB-SubCell"/>
</dbReference>
<dbReference type="InterPro" id="IPR022640">
    <property type="entry name" value="CYYR1"/>
</dbReference>
<dbReference type="PANTHER" id="PTHR38490">
    <property type="entry name" value="CYSTEINE AND TYROSINE-RICH PROTEIN 1"/>
    <property type="match status" value="1"/>
</dbReference>
<dbReference type="PANTHER" id="PTHR38490:SF1">
    <property type="entry name" value="CYSTEINE AND TYROSINE-RICH PROTEIN 1"/>
    <property type="match status" value="1"/>
</dbReference>
<dbReference type="Pfam" id="PF10873">
    <property type="entry name" value="CYYR1"/>
    <property type="match status" value="1"/>
</dbReference>
<comment type="subcellular location">
    <subcellularLocation>
        <location evidence="3">Membrane</location>
        <topology evidence="3">Single-pass type I membrane protein</topology>
    </subcellularLocation>
</comment>
<comment type="similarity">
    <text evidence="3">Belongs to the CYYR1 family.</text>
</comment>
<protein>
    <recommendedName>
        <fullName>Cysteine and tyrosine-rich protein 1</fullName>
    </recommendedName>
</protein>
<organism>
    <name type="scientific">Danio rerio</name>
    <name type="common">Zebrafish</name>
    <name type="synonym">Brachydanio rerio</name>
    <dbReference type="NCBI Taxonomy" id="7955"/>
    <lineage>
        <taxon>Eukaryota</taxon>
        <taxon>Metazoa</taxon>
        <taxon>Chordata</taxon>
        <taxon>Craniata</taxon>
        <taxon>Vertebrata</taxon>
        <taxon>Euteleostomi</taxon>
        <taxon>Actinopterygii</taxon>
        <taxon>Neopterygii</taxon>
        <taxon>Teleostei</taxon>
        <taxon>Ostariophysi</taxon>
        <taxon>Cypriniformes</taxon>
        <taxon>Danionidae</taxon>
        <taxon>Danioninae</taxon>
        <taxon>Danio</taxon>
    </lineage>
</organism>